<feature type="chain" id="PRO_0000294100" description="Uncharacterized protein YqgB">
    <location>
        <begin position="1"/>
        <end position="43"/>
    </location>
</feature>
<sequence length="43" mass="4835">MKKKPVAQSERQHTLLENPCAYGLLSQFQAATVVNCFTLNKII</sequence>
<organism>
    <name type="scientific">Shigella flexneri serotype 5b (strain 8401)</name>
    <dbReference type="NCBI Taxonomy" id="373384"/>
    <lineage>
        <taxon>Bacteria</taxon>
        <taxon>Pseudomonadati</taxon>
        <taxon>Pseudomonadota</taxon>
        <taxon>Gammaproteobacteria</taxon>
        <taxon>Enterobacterales</taxon>
        <taxon>Enterobacteriaceae</taxon>
        <taxon>Shigella</taxon>
    </lineage>
</organism>
<name>YQGB_SHIF8</name>
<keyword id="KW-0963">Cytoplasm</keyword>
<protein>
    <recommendedName>
        <fullName>Uncharacterized protein YqgB</fullName>
    </recommendedName>
</protein>
<comment type="subcellular location">
    <subcellularLocation>
        <location evidence="1">Cytoplasm</location>
    </subcellularLocation>
</comment>
<comment type="similarity">
    <text evidence="2">Belongs to the YqgB family.</text>
</comment>
<comment type="sequence caution" evidence="2">
    <conflict type="erroneous initiation">
        <sequence resource="EMBL-CDS" id="ABF05063"/>
    </conflict>
    <text>Extended N-terminus.</text>
</comment>
<proteinExistence type="inferred from homology"/>
<dbReference type="EMBL" id="CP000266">
    <property type="protein sequence ID" value="ABF05063.1"/>
    <property type="status" value="ALT_INIT"/>
    <property type="molecule type" value="Genomic_DNA"/>
</dbReference>
<dbReference type="RefSeq" id="WP_005051767.1">
    <property type="nucleotide sequence ID" value="NC_008258.1"/>
</dbReference>
<dbReference type="KEGG" id="sfv:SFV_2994"/>
<dbReference type="HOGENOM" id="CLU_216465_0_0_6"/>
<dbReference type="Proteomes" id="UP000000659">
    <property type="component" value="Chromosome"/>
</dbReference>
<dbReference type="GO" id="GO:0005737">
    <property type="term" value="C:cytoplasm"/>
    <property type="evidence" value="ECO:0007669"/>
    <property type="project" value="UniProtKB-SubCell"/>
</dbReference>
<dbReference type="InterPro" id="IPR020196">
    <property type="entry name" value="Uncharacterised_YqgB"/>
</dbReference>
<dbReference type="NCBIfam" id="NF033844">
    <property type="entry name" value="small_YqgB"/>
    <property type="match status" value="1"/>
</dbReference>
<dbReference type="Pfam" id="PF11036">
    <property type="entry name" value="YqgB"/>
    <property type="match status" value="1"/>
</dbReference>
<reference key="1">
    <citation type="journal article" date="2006" name="BMC Genomics">
        <title>Complete genome sequence of Shigella flexneri 5b and comparison with Shigella flexneri 2a.</title>
        <authorList>
            <person name="Nie H."/>
            <person name="Yang F."/>
            <person name="Zhang X."/>
            <person name="Yang J."/>
            <person name="Chen L."/>
            <person name="Wang J."/>
            <person name="Xiong Z."/>
            <person name="Peng J."/>
            <person name="Sun L."/>
            <person name="Dong J."/>
            <person name="Xue Y."/>
            <person name="Xu X."/>
            <person name="Chen S."/>
            <person name="Yao Z."/>
            <person name="Shen Y."/>
            <person name="Jin Q."/>
        </authorList>
    </citation>
    <scope>NUCLEOTIDE SEQUENCE [LARGE SCALE GENOMIC DNA]</scope>
    <source>
        <strain>8401</strain>
    </source>
</reference>
<gene>
    <name type="primary">yqgB</name>
    <name type="ordered locus">SFV_2994</name>
</gene>
<accession>Q0T0V2</accession>
<evidence type="ECO:0000250" key="1"/>
<evidence type="ECO:0000305" key="2"/>